<evidence type="ECO:0000255" key="1"/>
<evidence type="ECO:0000269" key="2">
    <source>
    </source>
</evidence>
<evidence type="ECO:0000305" key="3"/>
<evidence type="ECO:0007829" key="4">
    <source>
        <dbReference type="PDB" id="8IXK"/>
    </source>
</evidence>
<proteinExistence type="evidence at protein level"/>
<comment type="function">
    <text>Plays essential roles both in the entry of the viral genome into the bacterial host and in budding process. The formation of the G3P-G6P complex termed adsorption complex is essential for correct termination of filamentous phage assembly.</text>
</comment>
<comment type="subunit">
    <text evidence="2">Interacts with G3P; this interaction is required for proper integration of G3P and G6P into the virion.</text>
</comment>
<comment type="subcellular location">
    <subcellularLocation>
        <location evidence="3">Virion</location>
    </subcellularLocation>
    <subcellularLocation>
        <location evidence="3">Host membrane</location>
        <topology evidence="3">Multi-pass membrane protein</topology>
    </subcellularLocation>
    <text>Prior to assembly, G6P is found associated with the bacterial host inner membrane. There are about five copies of G6P in the mature virion. They are located together with G3P at the head side of the filamentous virion.</text>
</comment>
<comment type="similarity">
    <text evidence="3">Belongs to the inovirus G6P protein family.</text>
</comment>
<reference key="1">
    <citation type="journal article" date="1980" name="Gene">
        <title>Nucleotide sequence of the filamentous bacteriophage M13 DNA genome: comparison with phage fd.</title>
        <authorList>
            <person name="van Wezenbeek P.M.G.F."/>
            <person name="Hulsebos T.J.M."/>
            <person name="Schoenmakers J.G.G."/>
        </authorList>
    </citation>
    <scope>NUCLEOTIDE SEQUENCE [GENOMIC DNA]</scope>
</reference>
<reference key="2">
    <citation type="journal article" date="1994" name="Res. Microbiol.">
        <title>The role of the adsorption complex in the termination of filamentous phage assembly.</title>
        <authorList>
            <person name="Gailus V."/>
            <person name="Ramsperger U."/>
            <person name="Johner C."/>
            <person name="Kramer H."/>
            <person name="Rasched I."/>
        </authorList>
    </citation>
    <scope>INTERACTION WITH PROTEIN G3P</scope>
</reference>
<sequence length="112" mass="12350">MPVLLGIPLLLRFLGFLLVTLFGYLLTFLKKGFGKIAIAISLFLALIIGLNSILVGYLSDISAQLPSDFVQGVQLILPSNALPCFYVILSVKAAIFIFDVKQKIVSYLDWDK</sequence>
<keyword id="KW-0002">3D-structure</keyword>
<keyword id="KW-1043">Host membrane</keyword>
<keyword id="KW-0472">Membrane</keyword>
<keyword id="KW-1185">Reference proteome</keyword>
<keyword id="KW-0812">Transmembrane</keyword>
<keyword id="KW-1133">Transmembrane helix</keyword>
<keyword id="KW-1162">Viral penetration into host cytoplasm</keyword>
<keyword id="KW-1241">Viral penetration into host cytoplasm via pilus retraction</keyword>
<keyword id="KW-0946">Virion</keyword>
<keyword id="KW-1160">Virus entry into host cell</keyword>
<organism>
    <name type="scientific">Enterobacteria phage M13</name>
    <name type="common">Bacteriophage M13</name>
    <dbReference type="NCBI Taxonomy" id="1977402"/>
    <lineage>
        <taxon>Viruses</taxon>
        <taxon>Monodnaviria</taxon>
        <taxon>Loebvirae</taxon>
        <taxon>Hofneiviricota</taxon>
        <taxon>Faserviricetes</taxon>
        <taxon>Tubulavirales</taxon>
        <taxon>Inoviridae</taxon>
        <taxon>Inovirus</taxon>
    </lineage>
</organism>
<dbReference type="EMBL" id="V00604">
    <property type="protein sequence ID" value="CAA23863.1"/>
    <property type="molecule type" value="Genomic_DNA"/>
</dbReference>
<dbReference type="PIR" id="B04275">
    <property type="entry name" value="Z6BPM3"/>
</dbReference>
<dbReference type="RefSeq" id="NP_510892.1">
    <property type="nucleotide sequence ID" value="NC_003287.2"/>
</dbReference>
<dbReference type="RefSeq" id="YP_010774619.1">
    <property type="nucleotide sequence ID" value="NC_074765.1"/>
</dbReference>
<dbReference type="PDB" id="8IXK">
    <property type="method" value="EM"/>
    <property type="resolution" value="3.30 A"/>
    <property type="chains" value="E/J/O/Y/Z=1-112"/>
</dbReference>
<dbReference type="PDB" id="8JWX">
    <property type="method" value="EM"/>
    <property type="resolution" value="3.30 A"/>
    <property type="chains" value="E/J/O/Y/Z=1-112"/>
</dbReference>
<dbReference type="PDBsum" id="8IXK"/>
<dbReference type="PDBsum" id="8JWX"/>
<dbReference type="EMDB" id="EMD-35794"/>
<dbReference type="SMR" id="P69532"/>
<dbReference type="GeneID" id="80510929"/>
<dbReference type="GeneID" id="927335"/>
<dbReference type="KEGG" id="vg:927335"/>
<dbReference type="OrthoDB" id="39500at10239"/>
<dbReference type="Proteomes" id="UP000002111">
    <property type="component" value="Genome"/>
</dbReference>
<dbReference type="GO" id="GO:0033644">
    <property type="term" value="C:host cell membrane"/>
    <property type="evidence" value="ECO:0007669"/>
    <property type="project" value="UniProtKB-SubCell"/>
</dbReference>
<dbReference type="GO" id="GO:0016020">
    <property type="term" value="C:membrane"/>
    <property type="evidence" value="ECO:0007669"/>
    <property type="project" value="UniProtKB-KW"/>
</dbReference>
<dbReference type="GO" id="GO:0044423">
    <property type="term" value="C:virion component"/>
    <property type="evidence" value="ECO:0007669"/>
    <property type="project" value="UniProtKB-KW"/>
</dbReference>
<dbReference type="GO" id="GO:0046718">
    <property type="term" value="P:symbiont entry into host cell"/>
    <property type="evidence" value="ECO:0007669"/>
    <property type="project" value="UniProtKB-KW"/>
</dbReference>
<dbReference type="InterPro" id="IPR035210">
    <property type="entry name" value="DUF5455"/>
</dbReference>
<dbReference type="Pfam" id="PF17537">
    <property type="entry name" value="DUF5455"/>
    <property type="match status" value="1"/>
</dbReference>
<gene>
    <name type="primary">VI</name>
</gene>
<accession>P69532</accession>
<accession>P03673</accession>
<protein>
    <recommendedName>
        <fullName>Head virion protein G6P</fullName>
    </recommendedName>
    <alternativeName>
        <fullName>Coat protein D</fullName>
    </alternativeName>
    <alternativeName>
        <fullName>G6P</fullName>
    </alternativeName>
</protein>
<feature type="chain" id="PRO_0000098191" description="Head virion protein G6P">
    <location>
        <begin position="1"/>
        <end position="112"/>
    </location>
</feature>
<feature type="transmembrane region" description="Helical" evidence="1">
    <location>
        <begin position="3"/>
        <end position="23"/>
    </location>
</feature>
<feature type="transmembrane region" description="Helical" evidence="1">
    <location>
        <begin position="36"/>
        <end position="56"/>
    </location>
</feature>
<feature type="transmembrane region" description="Helical" evidence="1">
    <location>
        <begin position="80"/>
        <end position="100"/>
    </location>
</feature>
<feature type="helix" evidence="4">
    <location>
        <begin position="7"/>
        <end position="57"/>
    </location>
</feature>
<feature type="turn" evidence="4">
    <location>
        <begin position="58"/>
        <end position="61"/>
    </location>
</feature>
<feature type="helix" evidence="4">
    <location>
        <begin position="70"/>
        <end position="76"/>
    </location>
</feature>
<feature type="helix" evidence="4">
    <location>
        <begin position="81"/>
        <end position="106"/>
    </location>
</feature>
<feature type="helix" evidence="4">
    <location>
        <begin position="107"/>
        <end position="109"/>
    </location>
</feature>
<organismHost>
    <name type="scientific">Escherichia coli</name>
    <dbReference type="NCBI Taxonomy" id="562"/>
</organismHost>
<name>G6P_BPM13</name>